<keyword id="KW-1185">Reference proteome</keyword>
<keyword id="KW-0687">Ribonucleoprotein</keyword>
<keyword id="KW-0689">Ribosomal protein</keyword>
<accession>B2VK56</accession>
<reference key="1">
    <citation type="journal article" date="2008" name="Environ. Microbiol.">
        <title>The genome of Erwinia tasmaniensis strain Et1/99, a non-pathogenic bacterium in the genus Erwinia.</title>
        <authorList>
            <person name="Kube M."/>
            <person name="Migdoll A.M."/>
            <person name="Mueller I."/>
            <person name="Kuhl H."/>
            <person name="Beck A."/>
            <person name="Reinhardt R."/>
            <person name="Geider K."/>
        </authorList>
    </citation>
    <scope>NUCLEOTIDE SEQUENCE [LARGE SCALE GENOMIC DNA]</scope>
    <source>
        <strain>DSM 17950 / CFBP 7177 / CIP 109463 / NCPPB 4357 / Et1/99</strain>
    </source>
</reference>
<feature type="chain" id="PRO_1000121772" description="Large ribosomal subunit protein uL29">
    <location>
        <begin position="1"/>
        <end position="63"/>
    </location>
</feature>
<evidence type="ECO:0000255" key="1">
    <source>
        <dbReference type="HAMAP-Rule" id="MF_00374"/>
    </source>
</evidence>
<evidence type="ECO:0000305" key="2"/>
<proteinExistence type="inferred from homology"/>
<dbReference type="EMBL" id="CU468135">
    <property type="protein sequence ID" value="CAO98201.1"/>
    <property type="molecule type" value="Genomic_DNA"/>
</dbReference>
<dbReference type="RefSeq" id="WP_012442841.1">
    <property type="nucleotide sequence ID" value="NC_010694.1"/>
</dbReference>
<dbReference type="SMR" id="B2VK56"/>
<dbReference type="STRING" id="465817.ETA_31550"/>
<dbReference type="KEGG" id="eta:ETA_31550"/>
<dbReference type="eggNOG" id="COG0255">
    <property type="taxonomic scope" value="Bacteria"/>
</dbReference>
<dbReference type="HOGENOM" id="CLU_158491_1_2_6"/>
<dbReference type="OrthoDB" id="9815192at2"/>
<dbReference type="Proteomes" id="UP000001726">
    <property type="component" value="Chromosome"/>
</dbReference>
<dbReference type="GO" id="GO:0022625">
    <property type="term" value="C:cytosolic large ribosomal subunit"/>
    <property type="evidence" value="ECO:0007669"/>
    <property type="project" value="TreeGrafter"/>
</dbReference>
<dbReference type="GO" id="GO:0003735">
    <property type="term" value="F:structural constituent of ribosome"/>
    <property type="evidence" value="ECO:0007669"/>
    <property type="project" value="InterPro"/>
</dbReference>
<dbReference type="GO" id="GO:0006412">
    <property type="term" value="P:translation"/>
    <property type="evidence" value="ECO:0007669"/>
    <property type="project" value="UniProtKB-UniRule"/>
</dbReference>
<dbReference type="CDD" id="cd00427">
    <property type="entry name" value="Ribosomal_L29_HIP"/>
    <property type="match status" value="1"/>
</dbReference>
<dbReference type="FunFam" id="1.10.287.310:FF:000001">
    <property type="entry name" value="50S ribosomal protein L29"/>
    <property type="match status" value="1"/>
</dbReference>
<dbReference type="Gene3D" id="1.10.287.310">
    <property type="match status" value="1"/>
</dbReference>
<dbReference type="HAMAP" id="MF_00374">
    <property type="entry name" value="Ribosomal_uL29"/>
    <property type="match status" value="1"/>
</dbReference>
<dbReference type="InterPro" id="IPR050063">
    <property type="entry name" value="Ribosomal_protein_uL29"/>
</dbReference>
<dbReference type="InterPro" id="IPR001854">
    <property type="entry name" value="Ribosomal_uL29"/>
</dbReference>
<dbReference type="InterPro" id="IPR018254">
    <property type="entry name" value="Ribosomal_uL29_CS"/>
</dbReference>
<dbReference type="InterPro" id="IPR036049">
    <property type="entry name" value="Ribosomal_uL29_sf"/>
</dbReference>
<dbReference type="NCBIfam" id="TIGR00012">
    <property type="entry name" value="L29"/>
    <property type="match status" value="1"/>
</dbReference>
<dbReference type="PANTHER" id="PTHR10916">
    <property type="entry name" value="60S RIBOSOMAL PROTEIN L35/50S RIBOSOMAL PROTEIN L29"/>
    <property type="match status" value="1"/>
</dbReference>
<dbReference type="PANTHER" id="PTHR10916:SF0">
    <property type="entry name" value="LARGE RIBOSOMAL SUBUNIT PROTEIN UL29C"/>
    <property type="match status" value="1"/>
</dbReference>
<dbReference type="Pfam" id="PF00831">
    <property type="entry name" value="Ribosomal_L29"/>
    <property type="match status" value="1"/>
</dbReference>
<dbReference type="SUPFAM" id="SSF46561">
    <property type="entry name" value="Ribosomal protein L29 (L29p)"/>
    <property type="match status" value="1"/>
</dbReference>
<dbReference type="PROSITE" id="PS00579">
    <property type="entry name" value="RIBOSOMAL_L29"/>
    <property type="match status" value="1"/>
</dbReference>
<comment type="similarity">
    <text evidence="1">Belongs to the universal ribosomal protein uL29 family.</text>
</comment>
<gene>
    <name evidence="1" type="primary">rpmC</name>
    <name type="ordered locus">ETA_31550</name>
</gene>
<sequence length="63" mass="7247">MKATELREKSVEELNTELLNLLREQFNLRMQAASGQLQQTHVLKQLRRDVARVKTLLTEKAGA</sequence>
<name>RL29_ERWT9</name>
<protein>
    <recommendedName>
        <fullName evidence="1">Large ribosomal subunit protein uL29</fullName>
    </recommendedName>
    <alternativeName>
        <fullName evidence="2">50S ribosomal protein L29</fullName>
    </alternativeName>
</protein>
<organism>
    <name type="scientific">Erwinia tasmaniensis (strain DSM 17950 / CFBP 7177 / CIP 109463 / NCPPB 4357 / Et1/99)</name>
    <dbReference type="NCBI Taxonomy" id="465817"/>
    <lineage>
        <taxon>Bacteria</taxon>
        <taxon>Pseudomonadati</taxon>
        <taxon>Pseudomonadota</taxon>
        <taxon>Gammaproteobacteria</taxon>
        <taxon>Enterobacterales</taxon>
        <taxon>Erwiniaceae</taxon>
        <taxon>Erwinia</taxon>
    </lineage>
</organism>